<accession>A4QL39</accession>
<geneLocation type="chloroplast"/>
<sequence length="44" mass="5009">MRDLKTYLSVAPVLSTLWFGSLAGLLIEINRLFPDALTFPFFSF</sequence>
<gene>
    <name evidence="1" type="primary">psaJ</name>
</gene>
<organism>
    <name type="scientific">Draba nemorosa</name>
    <name type="common">Woodland whitlowgrass</name>
    <dbReference type="NCBI Taxonomy" id="171822"/>
    <lineage>
        <taxon>Eukaryota</taxon>
        <taxon>Viridiplantae</taxon>
        <taxon>Streptophyta</taxon>
        <taxon>Embryophyta</taxon>
        <taxon>Tracheophyta</taxon>
        <taxon>Spermatophyta</taxon>
        <taxon>Magnoliopsida</taxon>
        <taxon>eudicotyledons</taxon>
        <taxon>Gunneridae</taxon>
        <taxon>Pentapetalae</taxon>
        <taxon>rosids</taxon>
        <taxon>malvids</taxon>
        <taxon>Brassicales</taxon>
        <taxon>Brassicaceae</taxon>
        <taxon>Arabideae</taxon>
        <taxon>Draba</taxon>
    </lineage>
</organism>
<comment type="function">
    <text evidence="1">May help in the organization of the PsaE and PsaF subunits.</text>
</comment>
<comment type="subcellular location">
    <subcellularLocation>
        <location evidence="1">Plastid</location>
        <location evidence="1">Chloroplast thylakoid membrane</location>
        <topology evidence="1">Single-pass membrane protein</topology>
    </subcellularLocation>
</comment>
<comment type="similarity">
    <text evidence="1">Belongs to the PsaJ family.</text>
</comment>
<reference key="1">
    <citation type="submission" date="2007-03" db="EMBL/GenBank/DDBJ databases">
        <title>Sequencing analysis of Draba nemoroza chloroplast DNA.</title>
        <authorList>
            <person name="Hosouchi T."/>
            <person name="Tsuruoka H."/>
            <person name="Kotani H."/>
        </authorList>
    </citation>
    <scope>NUCLEOTIDE SEQUENCE [LARGE SCALE GENOMIC DNA]</scope>
</reference>
<feature type="chain" id="PRO_0000354146" description="Photosystem I reaction center subunit IX">
    <location>
        <begin position="1"/>
        <end position="44"/>
    </location>
</feature>
<feature type="transmembrane region" description="Helical" evidence="1">
    <location>
        <begin position="7"/>
        <end position="27"/>
    </location>
</feature>
<protein>
    <recommendedName>
        <fullName evidence="1">Photosystem I reaction center subunit IX</fullName>
    </recommendedName>
    <alternativeName>
        <fullName evidence="1">PSI-J</fullName>
    </alternativeName>
</protein>
<keyword id="KW-0150">Chloroplast</keyword>
<keyword id="KW-0472">Membrane</keyword>
<keyword id="KW-0602">Photosynthesis</keyword>
<keyword id="KW-0603">Photosystem I</keyword>
<keyword id="KW-0934">Plastid</keyword>
<keyword id="KW-0793">Thylakoid</keyword>
<keyword id="KW-0812">Transmembrane</keyword>
<keyword id="KW-1133">Transmembrane helix</keyword>
<dbReference type="EMBL" id="AP009373">
    <property type="protein sequence ID" value="BAF50394.1"/>
    <property type="molecule type" value="Genomic_DNA"/>
</dbReference>
<dbReference type="RefSeq" id="YP_001123570.1">
    <property type="nucleotide sequence ID" value="NC_009272.1"/>
</dbReference>
<dbReference type="SMR" id="A4QL39"/>
<dbReference type="GeneID" id="4964676"/>
<dbReference type="GO" id="GO:0009535">
    <property type="term" value="C:chloroplast thylakoid membrane"/>
    <property type="evidence" value="ECO:0007669"/>
    <property type="project" value="UniProtKB-SubCell"/>
</dbReference>
<dbReference type="GO" id="GO:0009522">
    <property type="term" value="C:photosystem I"/>
    <property type="evidence" value="ECO:0007669"/>
    <property type="project" value="UniProtKB-KW"/>
</dbReference>
<dbReference type="GO" id="GO:0015979">
    <property type="term" value="P:photosynthesis"/>
    <property type="evidence" value="ECO:0007669"/>
    <property type="project" value="UniProtKB-UniRule"/>
</dbReference>
<dbReference type="FunFam" id="1.20.5.510:FF:000001">
    <property type="entry name" value="Photosystem I reaction center subunit IX"/>
    <property type="match status" value="1"/>
</dbReference>
<dbReference type="Gene3D" id="1.20.5.510">
    <property type="entry name" value="Single helix bin"/>
    <property type="match status" value="1"/>
</dbReference>
<dbReference type="HAMAP" id="MF_00522">
    <property type="entry name" value="PSI_PsaJ"/>
    <property type="match status" value="1"/>
</dbReference>
<dbReference type="InterPro" id="IPR002615">
    <property type="entry name" value="PSI_PsaJ"/>
</dbReference>
<dbReference type="InterPro" id="IPR036062">
    <property type="entry name" value="PSI_PsaJ_sf"/>
</dbReference>
<dbReference type="PANTHER" id="PTHR36082">
    <property type="match status" value="1"/>
</dbReference>
<dbReference type="PANTHER" id="PTHR36082:SF2">
    <property type="entry name" value="PHOTOSYSTEM I REACTION CENTER SUBUNIT IX"/>
    <property type="match status" value="1"/>
</dbReference>
<dbReference type="Pfam" id="PF01701">
    <property type="entry name" value="PSI_PsaJ"/>
    <property type="match status" value="1"/>
</dbReference>
<dbReference type="SUPFAM" id="SSF81544">
    <property type="entry name" value="Subunit IX of photosystem I reaction centre, PsaJ"/>
    <property type="match status" value="1"/>
</dbReference>
<proteinExistence type="inferred from homology"/>
<evidence type="ECO:0000255" key="1">
    <source>
        <dbReference type="HAMAP-Rule" id="MF_00522"/>
    </source>
</evidence>
<name>PSAJ_DRANE</name>